<accession>D3ZVM4</accession>
<reference key="1">
    <citation type="journal article" date="2004" name="Nature">
        <title>Genome sequence of the Brown Norway rat yields insights into mammalian evolution.</title>
        <authorList>
            <person name="Gibbs R.A."/>
            <person name="Weinstock G.M."/>
            <person name="Metzker M.L."/>
            <person name="Muzny D.M."/>
            <person name="Sodergren E.J."/>
            <person name="Scherer S."/>
            <person name="Scott G."/>
            <person name="Steffen D."/>
            <person name="Worley K.C."/>
            <person name="Burch P.E."/>
            <person name="Okwuonu G."/>
            <person name="Hines S."/>
            <person name="Lewis L."/>
            <person name="Deramo C."/>
            <person name="Delgado O."/>
            <person name="Dugan-Rocha S."/>
            <person name="Miner G."/>
            <person name="Morgan M."/>
            <person name="Hawes A."/>
            <person name="Gill R."/>
            <person name="Holt R.A."/>
            <person name="Adams M.D."/>
            <person name="Amanatides P.G."/>
            <person name="Baden-Tillson H."/>
            <person name="Barnstead M."/>
            <person name="Chin S."/>
            <person name="Evans C.A."/>
            <person name="Ferriera S."/>
            <person name="Fosler C."/>
            <person name="Glodek A."/>
            <person name="Gu Z."/>
            <person name="Jennings D."/>
            <person name="Kraft C.L."/>
            <person name="Nguyen T."/>
            <person name="Pfannkoch C.M."/>
            <person name="Sitter C."/>
            <person name="Sutton G.G."/>
            <person name="Venter J.C."/>
            <person name="Woodage T."/>
            <person name="Smith D."/>
            <person name="Lee H.-M."/>
            <person name="Gustafson E."/>
            <person name="Cahill P."/>
            <person name="Kana A."/>
            <person name="Doucette-Stamm L."/>
            <person name="Weinstock K."/>
            <person name="Fechtel K."/>
            <person name="Weiss R.B."/>
            <person name="Dunn D.M."/>
            <person name="Green E.D."/>
            <person name="Blakesley R.W."/>
            <person name="Bouffard G.G."/>
            <person name="De Jong P.J."/>
            <person name="Osoegawa K."/>
            <person name="Zhu B."/>
            <person name="Marra M."/>
            <person name="Schein J."/>
            <person name="Bosdet I."/>
            <person name="Fjell C."/>
            <person name="Jones S."/>
            <person name="Krzywinski M."/>
            <person name="Mathewson C."/>
            <person name="Siddiqui A."/>
            <person name="Wye N."/>
            <person name="McPherson J."/>
            <person name="Zhao S."/>
            <person name="Fraser C.M."/>
            <person name="Shetty J."/>
            <person name="Shatsman S."/>
            <person name="Geer K."/>
            <person name="Chen Y."/>
            <person name="Abramzon S."/>
            <person name="Nierman W.C."/>
            <person name="Havlak P.H."/>
            <person name="Chen R."/>
            <person name="Durbin K.J."/>
            <person name="Egan A."/>
            <person name="Ren Y."/>
            <person name="Song X.-Z."/>
            <person name="Li B."/>
            <person name="Liu Y."/>
            <person name="Qin X."/>
            <person name="Cawley S."/>
            <person name="Cooney A.J."/>
            <person name="D'Souza L.M."/>
            <person name="Martin K."/>
            <person name="Wu J.Q."/>
            <person name="Gonzalez-Garay M.L."/>
            <person name="Jackson A.R."/>
            <person name="Kalafus K.J."/>
            <person name="McLeod M.P."/>
            <person name="Milosavljevic A."/>
            <person name="Virk D."/>
            <person name="Volkov A."/>
            <person name="Wheeler D.A."/>
            <person name="Zhang Z."/>
            <person name="Bailey J.A."/>
            <person name="Eichler E.E."/>
            <person name="Tuzun E."/>
            <person name="Birney E."/>
            <person name="Mongin E."/>
            <person name="Ureta-Vidal A."/>
            <person name="Woodwark C."/>
            <person name="Zdobnov E."/>
            <person name="Bork P."/>
            <person name="Suyama M."/>
            <person name="Torrents D."/>
            <person name="Alexandersson M."/>
            <person name="Trask B.J."/>
            <person name="Young J.M."/>
            <person name="Huang H."/>
            <person name="Wang H."/>
            <person name="Xing H."/>
            <person name="Daniels S."/>
            <person name="Gietzen D."/>
            <person name="Schmidt J."/>
            <person name="Stevens K."/>
            <person name="Vitt U."/>
            <person name="Wingrove J."/>
            <person name="Camara F."/>
            <person name="Mar Alba M."/>
            <person name="Abril J.F."/>
            <person name="Guigo R."/>
            <person name="Smit A."/>
            <person name="Dubchak I."/>
            <person name="Rubin E.M."/>
            <person name="Couronne O."/>
            <person name="Poliakov A."/>
            <person name="Huebner N."/>
            <person name="Ganten D."/>
            <person name="Goesele C."/>
            <person name="Hummel O."/>
            <person name="Kreitler T."/>
            <person name="Lee Y.-A."/>
            <person name="Monti J."/>
            <person name="Schulz H."/>
            <person name="Zimdahl H."/>
            <person name="Himmelbauer H."/>
            <person name="Lehrach H."/>
            <person name="Jacob H.J."/>
            <person name="Bromberg S."/>
            <person name="Gullings-Handley J."/>
            <person name="Jensen-Seaman M.I."/>
            <person name="Kwitek A.E."/>
            <person name="Lazar J."/>
            <person name="Pasko D."/>
            <person name="Tonellato P.J."/>
            <person name="Twigger S."/>
            <person name="Ponting C.P."/>
            <person name="Duarte J.M."/>
            <person name="Rice S."/>
            <person name="Goodstadt L."/>
            <person name="Beatson S.A."/>
            <person name="Emes R.D."/>
            <person name="Winter E.E."/>
            <person name="Webber C."/>
            <person name="Brandt P."/>
            <person name="Nyakatura G."/>
            <person name="Adetobi M."/>
            <person name="Chiaromonte F."/>
            <person name="Elnitski L."/>
            <person name="Eswara P."/>
            <person name="Hardison R.C."/>
            <person name="Hou M."/>
            <person name="Kolbe D."/>
            <person name="Makova K."/>
            <person name="Miller W."/>
            <person name="Nekrutenko A."/>
            <person name="Riemer C."/>
            <person name="Schwartz S."/>
            <person name="Taylor J."/>
            <person name="Yang S."/>
            <person name="Zhang Y."/>
            <person name="Lindpaintner K."/>
            <person name="Andrews T.D."/>
            <person name="Caccamo M."/>
            <person name="Clamp M."/>
            <person name="Clarke L."/>
            <person name="Curwen V."/>
            <person name="Durbin R.M."/>
            <person name="Eyras E."/>
            <person name="Searle S.M."/>
            <person name="Cooper G.M."/>
            <person name="Batzoglou S."/>
            <person name="Brudno M."/>
            <person name="Sidow A."/>
            <person name="Stone E.A."/>
            <person name="Payseur B.A."/>
            <person name="Bourque G."/>
            <person name="Lopez-Otin C."/>
            <person name="Puente X.S."/>
            <person name="Chakrabarti K."/>
            <person name="Chatterji S."/>
            <person name="Dewey C."/>
            <person name="Pachter L."/>
            <person name="Bray N."/>
            <person name="Yap V.B."/>
            <person name="Caspi A."/>
            <person name="Tesler G."/>
            <person name="Pevzner P.A."/>
            <person name="Haussler D."/>
            <person name="Roskin K.M."/>
            <person name="Baertsch R."/>
            <person name="Clawson H."/>
            <person name="Furey T.S."/>
            <person name="Hinrichs A.S."/>
            <person name="Karolchik D."/>
            <person name="Kent W.J."/>
            <person name="Rosenbloom K.R."/>
            <person name="Trumbower H."/>
            <person name="Weirauch M."/>
            <person name="Cooper D.N."/>
            <person name="Stenson P.D."/>
            <person name="Ma B."/>
            <person name="Brent M."/>
            <person name="Arumugam M."/>
            <person name="Shteynberg D."/>
            <person name="Copley R.R."/>
            <person name="Taylor M.S."/>
            <person name="Riethman H."/>
            <person name="Mudunuri U."/>
            <person name="Peterson J."/>
            <person name="Guyer M."/>
            <person name="Felsenfeld A."/>
            <person name="Old S."/>
            <person name="Mockrin S."/>
            <person name="Collins F.S."/>
        </authorList>
    </citation>
    <scope>NUCLEOTIDE SEQUENCE [LARGE SCALE GENOMIC DNA]</scope>
    <source>
        <strain>Brown Norway</strain>
    </source>
</reference>
<sequence length="855" mass="92125">MASFPETDFQICLLCKEMCGSPAPLSSSSSASSSSSQTSTSSAGGGGPGAAARRLHVLPCLHAFCRPCLEAHRLPAPGGAGPAEALKLRCPVCDQKVVLAEAAGMDALPSSAFLLSNLLDAVVATADEPPPKNGRAGGGPGGAGGHSNHRHHAHHPAQRAAAPAPQPPPGPAASPGSLLLRRPHGCSSCDEGNAASSRCLDCQEHLCDNCVRAHQRVRLTKDHYIERGPPGPAAASAAQQLGLGPPFAGAPFSILSVFPERLGFCQHHDDEVLHLYCDTCSVPICRECTLGRHGGHSFAYLQDALQDSRALTIQLLADAQQGRQAIQLSIEQAQTVAEQVEMKAKVVQSEVKAVTARHKKALEERECELLWKVEKIRQVKAKSLYLQVEKLRQNLNKLESTISAVQQVLEEGRALDILLARDRMLAQVQELKTIRGLLQPQEDDRVMFTPPDQALYLALKSFGFVSSGAFAPLTKAAGDGIKRALQGKVASFTVMGYDHNGEPRLSGGDLMSVVVLGPDGNLFGAEVSDQQNGTYVVSYRPQLEGEHLVSVTLYNQHIENSPFKVVVKSGRSYVGIGLPVLSFGSEGDGEGKLCRPWGVSVDKEGYIIVADRSNNRIQVFKPCGSFHHKFGTLGSRPGQFDRPAGVACDASRRIVVADKDNHRIQIFTFEGQFLLKFGEKGTKNGQFNYPWDVAVNSEGKILVSDTRNHRIQLFGPDGVFLNKYGFEGSLWKHFDSPRGVAFNHEGHLVVTDFNNHRLLVIHPDCQSARFLGSEGTGNGQFLRPQGVAVDQEGRIIVADSRNHRVQMFEANGSFLCKFGAQGSGFGQMDRPSGIAVTPEGLIVVVDFGNNRILIF</sequence>
<name>LIN41_RAT</name>
<dbReference type="EC" id="2.3.2.27"/>
<dbReference type="RefSeq" id="NP_001178730.1">
    <property type="nucleotide sequence ID" value="NM_001191801.1"/>
</dbReference>
<dbReference type="SMR" id="D3ZVM4"/>
<dbReference type="FunCoup" id="D3ZVM4">
    <property type="interactions" value="603"/>
</dbReference>
<dbReference type="STRING" id="10116.ENSRNOP00000044089"/>
<dbReference type="PhosphoSitePlus" id="D3ZVM4"/>
<dbReference type="PaxDb" id="10116-ENSRNOP00000044089"/>
<dbReference type="Ensembl" id="ENSRNOT00000047198.4">
    <property type="protein sequence ID" value="ENSRNOP00000044089.3"/>
    <property type="gene ID" value="ENSRNOG00000030098.4"/>
</dbReference>
<dbReference type="GeneID" id="301042"/>
<dbReference type="KEGG" id="rno:301042"/>
<dbReference type="UCSC" id="RGD:1566388">
    <property type="organism name" value="rat"/>
</dbReference>
<dbReference type="AGR" id="RGD:1566388"/>
<dbReference type="CTD" id="131405"/>
<dbReference type="RGD" id="1566388">
    <property type="gene designation" value="Trim71"/>
</dbReference>
<dbReference type="eggNOG" id="KOG2177">
    <property type="taxonomic scope" value="Eukaryota"/>
</dbReference>
<dbReference type="GeneTree" id="ENSGT00940000159099"/>
<dbReference type="HOGENOM" id="CLU_008645_4_1_1"/>
<dbReference type="InParanoid" id="D3ZVM4"/>
<dbReference type="OMA" id="WKQFDSP"/>
<dbReference type="OrthoDB" id="342730at2759"/>
<dbReference type="PhylomeDB" id="D3ZVM4"/>
<dbReference type="TreeFam" id="TF331018"/>
<dbReference type="Reactome" id="R-RNO-983168">
    <property type="pathway name" value="Antigen processing: Ubiquitination &amp; Proteasome degradation"/>
</dbReference>
<dbReference type="UniPathway" id="UPA00143"/>
<dbReference type="PRO" id="PR:D3ZVM4"/>
<dbReference type="Proteomes" id="UP000002494">
    <property type="component" value="Chromosome 8"/>
</dbReference>
<dbReference type="GO" id="GO:0000932">
    <property type="term" value="C:P-body"/>
    <property type="evidence" value="ECO:0000250"/>
    <property type="project" value="UniProtKB"/>
</dbReference>
<dbReference type="GO" id="GO:0035198">
    <property type="term" value="F:miRNA binding"/>
    <property type="evidence" value="ECO:0000250"/>
    <property type="project" value="UniProtKB"/>
</dbReference>
<dbReference type="GO" id="GO:0030371">
    <property type="term" value="F:translation repressor activity"/>
    <property type="evidence" value="ECO:0000266"/>
    <property type="project" value="RGD"/>
</dbReference>
<dbReference type="GO" id="GO:0061630">
    <property type="term" value="F:ubiquitin protein ligase activity"/>
    <property type="evidence" value="ECO:0000266"/>
    <property type="project" value="RGD"/>
</dbReference>
<dbReference type="GO" id="GO:0004842">
    <property type="term" value="F:ubiquitin-protein transferase activity"/>
    <property type="evidence" value="ECO:0000250"/>
    <property type="project" value="UniProtKB"/>
</dbReference>
<dbReference type="GO" id="GO:0008270">
    <property type="term" value="F:zinc ion binding"/>
    <property type="evidence" value="ECO:0007669"/>
    <property type="project" value="UniProtKB-KW"/>
</dbReference>
<dbReference type="GO" id="GO:0061158">
    <property type="term" value="P:3'-UTR-mediated mRNA destabilization"/>
    <property type="evidence" value="ECO:0000266"/>
    <property type="project" value="RGD"/>
</dbReference>
<dbReference type="GO" id="GO:0008543">
    <property type="term" value="P:fibroblast growth factor receptor signaling pathway"/>
    <property type="evidence" value="ECO:0000250"/>
    <property type="project" value="UniProtKB"/>
</dbReference>
<dbReference type="GO" id="GO:0000082">
    <property type="term" value="P:G1/S transition of mitotic cell cycle"/>
    <property type="evidence" value="ECO:0000250"/>
    <property type="project" value="UniProtKB"/>
</dbReference>
<dbReference type="GO" id="GO:0035196">
    <property type="term" value="P:miRNA processing"/>
    <property type="evidence" value="ECO:0000250"/>
    <property type="project" value="UniProtKB"/>
</dbReference>
<dbReference type="GO" id="GO:0035278">
    <property type="term" value="P:miRNA-mediated gene silencing by inhibition of translation"/>
    <property type="evidence" value="ECO:0000250"/>
    <property type="project" value="UniProtKB"/>
</dbReference>
<dbReference type="GO" id="GO:0017148">
    <property type="term" value="P:negative regulation of translation"/>
    <property type="evidence" value="ECO:0000266"/>
    <property type="project" value="RGD"/>
</dbReference>
<dbReference type="GO" id="GO:0001843">
    <property type="term" value="P:neural tube closure"/>
    <property type="evidence" value="ECO:0000266"/>
    <property type="project" value="RGD"/>
</dbReference>
<dbReference type="GO" id="GO:0021915">
    <property type="term" value="P:neural tube development"/>
    <property type="evidence" value="ECO:0000250"/>
    <property type="project" value="UniProtKB"/>
</dbReference>
<dbReference type="GO" id="GO:2000637">
    <property type="term" value="P:positive regulation of miRNA-mediated gene silencing"/>
    <property type="evidence" value="ECO:0000266"/>
    <property type="project" value="RGD"/>
</dbReference>
<dbReference type="GO" id="GO:0010608">
    <property type="term" value="P:post-transcriptional regulation of gene expression"/>
    <property type="evidence" value="ECO:0000250"/>
    <property type="project" value="UniProtKB"/>
</dbReference>
<dbReference type="GO" id="GO:0043161">
    <property type="term" value="P:proteasome-mediated ubiquitin-dependent protein catabolic process"/>
    <property type="evidence" value="ECO:0000318"/>
    <property type="project" value="GO_Central"/>
</dbReference>
<dbReference type="GO" id="GO:0051865">
    <property type="term" value="P:protein autoubiquitination"/>
    <property type="evidence" value="ECO:0000250"/>
    <property type="project" value="UniProtKB"/>
</dbReference>
<dbReference type="GO" id="GO:0000209">
    <property type="term" value="P:protein polyubiquitination"/>
    <property type="evidence" value="ECO:0000318"/>
    <property type="project" value="GO_Central"/>
</dbReference>
<dbReference type="GO" id="GO:0060964">
    <property type="term" value="P:regulation of miRNA-mediated gene silencing"/>
    <property type="evidence" value="ECO:0000266"/>
    <property type="project" value="RGD"/>
</dbReference>
<dbReference type="GO" id="GO:2000177">
    <property type="term" value="P:regulation of neural precursor cell proliferation"/>
    <property type="evidence" value="ECO:0000250"/>
    <property type="project" value="UniProtKB"/>
</dbReference>
<dbReference type="GO" id="GO:0051246">
    <property type="term" value="P:regulation of protein metabolic process"/>
    <property type="evidence" value="ECO:0000266"/>
    <property type="project" value="RGD"/>
</dbReference>
<dbReference type="GO" id="GO:0072089">
    <property type="term" value="P:stem cell proliferation"/>
    <property type="evidence" value="ECO:0000250"/>
    <property type="project" value="UniProtKB"/>
</dbReference>
<dbReference type="CDD" id="cd19812">
    <property type="entry name" value="Bbox1_TRIM71_C-VII"/>
    <property type="match status" value="1"/>
</dbReference>
<dbReference type="CDD" id="cd19796">
    <property type="entry name" value="Bbox2_TRIM71_C-VII"/>
    <property type="match status" value="1"/>
</dbReference>
<dbReference type="CDD" id="cd14954">
    <property type="entry name" value="NHL_TRIM71_like"/>
    <property type="match status" value="1"/>
</dbReference>
<dbReference type="CDD" id="cd16589">
    <property type="entry name" value="RING-HC_TRIM71_C-VII"/>
    <property type="match status" value="1"/>
</dbReference>
<dbReference type="FunFam" id="2.120.10.30:FF:000013">
    <property type="entry name" value="E3 ubiquitin-protein ligase TRIM71"/>
    <property type="match status" value="1"/>
</dbReference>
<dbReference type="FunFam" id="2.120.10.30:FF:000025">
    <property type="entry name" value="E3 ubiquitin-protein ligase TRIM71"/>
    <property type="match status" value="1"/>
</dbReference>
<dbReference type="FunFam" id="2.120.10.30:FF:000080">
    <property type="entry name" value="E3 ubiquitin-protein ligase TRIM71"/>
    <property type="match status" value="1"/>
</dbReference>
<dbReference type="FunFam" id="2.60.40.10:FF:000527">
    <property type="entry name" value="E3 ubiquitin-protein ligase TRIM71"/>
    <property type="match status" value="1"/>
</dbReference>
<dbReference type="FunFam" id="3.30.160.60:FF:000923">
    <property type="entry name" value="E3 ubiquitin-protein ligase TRIM71"/>
    <property type="match status" value="1"/>
</dbReference>
<dbReference type="FunFam" id="3.30.40.10:FF:000398">
    <property type="entry name" value="E3 ubiquitin-protein ligase TRIM71"/>
    <property type="match status" value="1"/>
</dbReference>
<dbReference type="Gene3D" id="3.30.160.60">
    <property type="entry name" value="Classic Zinc Finger"/>
    <property type="match status" value="1"/>
</dbReference>
<dbReference type="Gene3D" id="2.60.40.10">
    <property type="entry name" value="Immunoglobulins"/>
    <property type="match status" value="1"/>
</dbReference>
<dbReference type="Gene3D" id="2.120.10.30">
    <property type="entry name" value="TolB, C-terminal domain"/>
    <property type="match status" value="2"/>
</dbReference>
<dbReference type="Gene3D" id="3.30.40.10">
    <property type="entry name" value="Zinc/RING finger domain, C3HC4 (zinc finger)"/>
    <property type="match status" value="1"/>
</dbReference>
<dbReference type="InterPro" id="IPR011042">
    <property type="entry name" value="6-blade_b-propeller_TolB-like"/>
</dbReference>
<dbReference type="InterPro" id="IPR017868">
    <property type="entry name" value="Filamin/ABP280_repeat-like"/>
</dbReference>
<dbReference type="InterPro" id="IPR001298">
    <property type="entry name" value="Filamin/ABP280_rpt"/>
</dbReference>
<dbReference type="InterPro" id="IPR013783">
    <property type="entry name" value="Ig-like_fold"/>
</dbReference>
<dbReference type="InterPro" id="IPR014756">
    <property type="entry name" value="Ig_E-set"/>
</dbReference>
<dbReference type="InterPro" id="IPR001258">
    <property type="entry name" value="NHL_repeat"/>
</dbReference>
<dbReference type="InterPro" id="IPR050952">
    <property type="entry name" value="TRIM-NHL_E3_ligases"/>
</dbReference>
<dbReference type="InterPro" id="IPR000315">
    <property type="entry name" value="Znf_B-box"/>
</dbReference>
<dbReference type="InterPro" id="IPR018957">
    <property type="entry name" value="Znf_C3HC4_RING-type"/>
</dbReference>
<dbReference type="InterPro" id="IPR001841">
    <property type="entry name" value="Znf_RING"/>
</dbReference>
<dbReference type="InterPro" id="IPR013083">
    <property type="entry name" value="Znf_RING/FYVE/PHD"/>
</dbReference>
<dbReference type="InterPro" id="IPR017907">
    <property type="entry name" value="Znf_RING_CS"/>
</dbReference>
<dbReference type="PANTHER" id="PTHR24104">
    <property type="entry name" value="E3 UBIQUITIN-PROTEIN LIGASE NHLRC1-RELATED"/>
    <property type="match status" value="1"/>
</dbReference>
<dbReference type="PANTHER" id="PTHR24104:SF25">
    <property type="entry name" value="PROTEIN LIN-41"/>
    <property type="match status" value="1"/>
</dbReference>
<dbReference type="Pfam" id="PF00630">
    <property type="entry name" value="Filamin"/>
    <property type="match status" value="1"/>
</dbReference>
<dbReference type="Pfam" id="PF01436">
    <property type="entry name" value="NHL"/>
    <property type="match status" value="6"/>
</dbReference>
<dbReference type="Pfam" id="PF00643">
    <property type="entry name" value="zf-B_box"/>
    <property type="match status" value="1"/>
</dbReference>
<dbReference type="Pfam" id="PF00097">
    <property type="entry name" value="zf-C3HC4"/>
    <property type="match status" value="1"/>
</dbReference>
<dbReference type="SMART" id="SM00336">
    <property type="entry name" value="BBOX"/>
    <property type="match status" value="2"/>
</dbReference>
<dbReference type="SMART" id="SM00557">
    <property type="entry name" value="IG_FLMN"/>
    <property type="match status" value="1"/>
</dbReference>
<dbReference type="SMART" id="SM00184">
    <property type="entry name" value="RING"/>
    <property type="match status" value="1"/>
</dbReference>
<dbReference type="SUPFAM" id="SSF57845">
    <property type="entry name" value="B-box zinc-binding domain"/>
    <property type="match status" value="1"/>
</dbReference>
<dbReference type="SUPFAM" id="SSF81296">
    <property type="entry name" value="E set domains"/>
    <property type="match status" value="1"/>
</dbReference>
<dbReference type="SUPFAM" id="SSF101898">
    <property type="entry name" value="NHL repeat"/>
    <property type="match status" value="1"/>
</dbReference>
<dbReference type="SUPFAM" id="SSF57850">
    <property type="entry name" value="RING/U-box"/>
    <property type="match status" value="1"/>
</dbReference>
<dbReference type="PROSITE" id="PS50194">
    <property type="entry name" value="FILAMIN_REPEAT"/>
    <property type="match status" value="1"/>
</dbReference>
<dbReference type="PROSITE" id="PS51125">
    <property type="entry name" value="NHL"/>
    <property type="match status" value="6"/>
</dbReference>
<dbReference type="PROSITE" id="PS50119">
    <property type="entry name" value="ZF_BBOX"/>
    <property type="match status" value="1"/>
</dbReference>
<dbReference type="PROSITE" id="PS00518">
    <property type="entry name" value="ZF_RING_1"/>
    <property type="match status" value="1"/>
</dbReference>
<dbReference type="PROSITE" id="PS50089">
    <property type="entry name" value="ZF_RING_2"/>
    <property type="match status" value="1"/>
</dbReference>
<protein>
    <recommendedName>
        <fullName>E3 ubiquitin-protein ligase TRIM71</fullName>
        <ecNumber>2.3.2.27</ecNumber>
    </recommendedName>
    <alternativeName>
        <fullName>Protein lin-41 homolog</fullName>
    </alternativeName>
    <alternativeName>
        <fullName evidence="7">RING-type E3 ubiquitin transferase TRIM71</fullName>
    </alternativeName>
    <alternativeName>
        <fullName>Tripartite motif-containing protein 71</fullName>
    </alternativeName>
</protein>
<comment type="function">
    <text evidence="1 2">E3 ubiquitin-protein ligase that cooperates with the microRNAs (miRNAs) machinery and promotes embryonic stem cells proliferation and maintenance (By similarity). Binds to miRNAs and associates with AGO2, participating in post-transcriptional repression of transcripts such as CDKN1A (By similarity). In addition, participates in post-transcriptional mRNA repression in a miRNA independent mechanism (By similarity). Facilitates the G1-S transition to promote rapid embryonic stem cell self-renewal by repressing CDKN1A expression. Required to maintain proliferation and prevent premature differentiation of neural progenitor cells during early neural development: positively regulates FGF signaling by controlling the stability of SHCBP1 (By similarity). Specific regulator of miRNA biogenesis. Binds to miRNA MIR29A hairpin and postranscriptionally modulates MIR29A levels, which indirectly regulates TET proteins expression (By similarity).</text>
</comment>
<comment type="catalytic activity">
    <reaction>
        <text>S-ubiquitinyl-[E2 ubiquitin-conjugating enzyme]-L-cysteine + [acceptor protein]-L-lysine = [E2 ubiquitin-conjugating enzyme]-L-cysteine + N(6)-ubiquitinyl-[acceptor protein]-L-lysine.</text>
        <dbReference type="EC" id="2.3.2.27"/>
    </reaction>
</comment>
<comment type="pathway">
    <text>Protein modification; protein ubiquitination.</text>
</comment>
<comment type="subunit">
    <text evidence="1 2">Interacts (via NHL repeats) with AGO2; the interaction increases in presence of RNA. Interacts with HSP90AA1. Interacts (via NHL repeats) with MOV10, PABPC1, PUM1, PUM2, STAU2, XRN1 and XRN2 in an RNA-dependent manner (By similarity). Interacts with SHCBP1; leading to enhance its stability (By similarity).</text>
</comment>
<comment type="subcellular location">
    <subcellularLocation>
        <location evidence="2">Cytoplasm</location>
        <location evidence="2">P-body</location>
    </subcellularLocation>
</comment>
<comment type="domain">
    <text evidence="2">The NHL domain, containing the 6 NHL repeats, is necessary and sufficient to target RNA but not to repress mRNA. The minimal region needed to execute repression consists of the coiled coil domain and the Filamin repeat. The RING-type domain is dispensable for mRNA repression.</text>
</comment>
<comment type="PTM">
    <text evidence="1">Autoubiquitinated.</text>
</comment>
<comment type="similarity">
    <text evidence="7">Belongs to the TRIM/RBCC family.</text>
</comment>
<organism>
    <name type="scientific">Rattus norvegicus</name>
    <name type="common">Rat</name>
    <dbReference type="NCBI Taxonomy" id="10116"/>
    <lineage>
        <taxon>Eukaryota</taxon>
        <taxon>Metazoa</taxon>
        <taxon>Chordata</taxon>
        <taxon>Craniata</taxon>
        <taxon>Vertebrata</taxon>
        <taxon>Euteleostomi</taxon>
        <taxon>Mammalia</taxon>
        <taxon>Eutheria</taxon>
        <taxon>Euarchontoglires</taxon>
        <taxon>Glires</taxon>
        <taxon>Rodentia</taxon>
        <taxon>Myomorpha</taxon>
        <taxon>Muroidea</taxon>
        <taxon>Muridae</taxon>
        <taxon>Murinae</taxon>
        <taxon>Rattus</taxon>
    </lineage>
</organism>
<feature type="initiator methionine" description="Removed" evidence="2">
    <location>
        <position position="1"/>
    </location>
</feature>
<feature type="chain" id="PRO_0000420479" description="E3 ubiquitin-protein ligase TRIM71">
    <location>
        <begin position="2"/>
        <end position="855"/>
    </location>
</feature>
<feature type="repeat" description="Filamin">
    <location>
        <begin position="466"/>
        <end position="567"/>
    </location>
</feature>
<feature type="repeat" description="NHL 1">
    <location>
        <begin position="580"/>
        <end position="623"/>
    </location>
</feature>
<feature type="repeat" description="NHL 2">
    <location>
        <begin position="627"/>
        <end position="670"/>
    </location>
</feature>
<feature type="repeat" description="NHL 3">
    <location>
        <begin position="674"/>
        <end position="717"/>
    </location>
</feature>
<feature type="repeat" description="NHL 4">
    <location>
        <begin position="721"/>
        <end position="764"/>
    </location>
</feature>
<feature type="repeat" description="NHL 5">
    <location>
        <begin position="768"/>
        <end position="811"/>
    </location>
</feature>
<feature type="repeat" description="NHL 6">
    <location>
        <begin position="815"/>
        <end position="855"/>
    </location>
</feature>
<feature type="zinc finger region" description="RING-type" evidence="5">
    <location>
        <begin position="12"/>
        <end position="94"/>
    </location>
</feature>
<feature type="zinc finger region" description="B box-type 1; atypical" evidence="4">
    <location>
        <begin position="181"/>
        <end position="228"/>
    </location>
</feature>
<feature type="zinc finger region" description="B box-type 2" evidence="4">
    <location>
        <begin position="260"/>
        <end position="301"/>
    </location>
</feature>
<feature type="region of interest" description="Disordered" evidence="6">
    <location>
        <begin position="26"/>
        <end position="48"/>
    </location>
</feature>
<feature type="region of interest" description="Disordered" evidence="6">
    <location>
        <begin position="126"/>
        <end position="177"/>
    </location>
</feature>
<feature type="coiled-coil region" evidence="3">
    <location>
        <begin position="378"/>
        <end position="414"/>
    </location>
</feature>
<feature type="compositionally biased region" description="Low complexity" evidence="6">
    <location>
        <begin position="26"/>
        <end position="42"/>
    </location>
</feature>
<feature type="compositionally biased region" description="Gly residues" evidence="6">
    <location>
        <begin position="135"/>
        <end position="145"/>
    </location>
</feature>
<feature type="compositionally biased region" description="Basic residues" evidence="6">
    <location>
        <begin position="147"/>
        <end position="157"/>
    </location>
</feature>
<feature type="binding site" evidence="4">
    <location>
        <position position="265"/>
    </location>
    <ligand>
        <name>Zn(2+)</name>
        <dbReference type="ChEBI" id="CHEBI:29105"/>
    </ligand>
</feature>
<feature type="binding site" evidence="4">
    <location>
        <position position="268"/>
    </location>
    <ligand>
        <name>Zn(2+)</name>
        <dbReference type="ChEBI" id="CHEBI:29105"/>
    </ligand>
</feature>
<feature type="binding site" evidence="4">
    <location>
        <position position="288"/>
    </location>
    <ligand>
        <name>Zn(2+)</name>
        <dbReference type="ChEBI" id="CHEBI:29105"/>
    </ligand>
</feature>
<feature type="binding site" evidence="4">
    <location>
        <position position="293"/>
    </location>
    <ligand>
        <name>Zn(2+)</name>
        <dbReference type="ChEBI" id="CHEBI:29105"/>
    </ligand>
</feature>
<feature type="modified residue" description="N-acetylalanine" evidence="2">
    <location>
        <position position="2"/>
    </location>
</feature>
<evidence type="ECO:0000250" key="1">
    <source>
        <dbReference type="UniProtKB" id="Q1PSW8"/>
    </source>
</evidence>
<evidence type="ECO:0000250" key="2">
    <source>
        <dbReference type="UniProtKB" id="Q2Q1W2"/>
    </source>
</evidence>
<evidence type="ECO:0000255" key="3"/>
<evidence type="ECO:0000255" key="4">
    <source>
        <dbReference type="PROSITE-ProRule" id="PRU00024"/>
    </source>
</evidence>
<evidence type="ECO:0000255" key="5">
    <source>
        <dbReference type="PROSITE-ProRule" id="PRU00175"/>
    </source>
</evidence>
<evidence type="ECO:0000256" key="6">
    <source>
        <dbReference type="SAM" id="MobiDB-lite"/>
    </source>
</evidence>
<evidence type="ECO:0000305" key="7"/>
<gene>
    <name type="primary">Trim71</name>
    <name type="synonym">Lin41</name>
</gene>
<keyword id="KW-0007">Acetylation</keyword>
<keyword id="KW-0175">Coiled coil</keyword>
<keyword id="KW-0963">Cytoplasm</keyword>
<keyword id="KW-0217">Developmental protein</keyword>
<keyword id="KW-0479">Metal-binding</keyword>
<keyword id="KW-1185">Reference proteome</keyword>
<keyword id="KW-0677">Repeat</keyword>
<keyword id="KW-0694">RNA-binding</keyword>
<keyword id="KW-0943">RNA-mediated gene silencing</keyword>
<keyword id="KW-0808">Transferase</keyword>
<keyword id="KW-0832">Ubl conjugation</keyword>
<keyword id="KW-0833">Ubl conjugation pathway</keyword>
<keyword id="KW-0862">Zinc</keyword>
<keyword id="KW-0863">Zinc-finger</keyword>
<proteinExistence type="inferred from homology"/>